<comment type="function">
    <text evidence="1">Catalyzes the conversion of (8S)-3',8-cyclo-7,8-dihydroguanosine 5'-triphosphate to cyclic pyranopterin monophosphate (cPMP).</text>
</comment>
<comment type="catalytic activity">
    <reaction evidence="1">
        <text>(8S)-3',8-cyclo-7,8-dihydroguanosine 5'-triphosphate = cyclic pyranopterin phosphate + diphosphate</text>
        <dbReference type="Rhea" id="RHEA:49580"/>
        <dbReference type="ChEBI" id="CHEBI:33019"/>
        <dbReference type="ChEBI" id="CHEBI:59648"/>
        <dbReference type="ChEBI" id="CHEBI:131766"/>
        <dbReference type="EC" id="4.6.1.17"/>
    </reaction>
</comment>
<comment type="pathway">
    <text evidence="1">Cofactor biosynthesis; molybdopterin biosynthesis.</text>
</comment>
<comment type="similarity">
    <text evidence="2">In the N-terminal section; belongs to the MoaC family.</text>
</comment>
<comment type="similarity">
    <text evidence="2">In the C-terminal section; belongs to the MoaB/Mog family.</text>
</comment>
<keyword id="KW-0456">Lyase</keyword>
<keyword id="KW-0501">Molybdenum cofactor biosynthesis</keyword>
<keyword id="KW-1185">Reference proteome</keyword>
<protein>
    <recommendedName>
        <fullName>Molybdenum cofactor biosynthesis bifunctional protein</fullName>
    </recommendedName>
    <domain>
        <recommendedName>
            <fullName evidence="1">Cyclic pyranopterin monophosphate synthase</fullName>
            <ecNumber evidence="1">4.6.1.17</ecNumber>
        </recommendedName>
        <alternativeName>
            <fullName evidence="1">Molybdenum cofactor biosynthesis protein C</fullName>
        </alternativeName>
    </domain>
    <domain>
        <recommendedName>
            <fullName>Molybdenum cofactor biosynthesis protein B</fullName>
        </recommendedName>
    </domain>
</protein>
<gene>
    <name type="primary">moaCB</name>
    <name type="ordered locus">CT1330</name>
</gene>
<organism>
    <name type="scientific">Chlorobaculum tepidum (strain ATCC 49652 / DSM 12025 / NBRC 103806 / TLS)</name>
    <name type="common">Chlorobium tepidum</name>
    <dbReference type="NCBI Taxonomy" id="194439"/>
    <lineage>
        <taxon>Bacteria</taxon>
        <taxon>Pseudomonadati</taxon>
        <taxon>Chlorobiota</taxon>
        <taxon>Chlorobiia</taxon>
        <taxon>Chlorobiales</taxon>
        <taxon>Chlorobiaceae</taxon>
        <taxon>Chlorobaculum</taxon>
    </lineage>
</organism>
<sequence>MEFTHLDENGMVRMADVSGKPPTRRKACASGRIVMLPETIALLRRKELPKGNVLAAAKIAGIQAAKQTSTLIPLCHQLNLSWIDIEFEIGDDSIGIAATVITRESTGVEMEALAAVSVAALTIYDMCKAVDKTMEISAIRLDHKTGGKSSAAEYHPRTAILVMSDSIAAGTATDHSGAILREGLQKAGCAVEALTITPDEPVEIAATVEAWIGEGIEFIVTSGGTGLGPRDLAIDTLAPKFTRRLPGVEQELLRWGQTKTRTAMLSRLAAGVIGNTVVVCLPGSTSAAKDALEVLVPAIFHAFPMLKGDGHA</sequence>
<name>MOACB_CHLTE</name>
<proteinExistence type="inferred from homology"/>
<accession>P59014</accession>
<feature type="chain" id="PRO_0000097848" description="Molybdenum cofactor biosynthesis bifunctional protein">
    <location>
        <begin position="1"/>
        <end position="312"/>
    </location>
</feature>
<feature type="region of interest" description="Molybdenum cofactor biosynthesis protein C">
    <location>
        <begin position="1"/>
        <end position="155"/>
    </location>
</feature>
<feature type="region of interest" description="Molybdenum cofactor biosynthesis protein B">
    <location>
        <begin position="156"/>
        <end position="312"/>
    </location>
</feature>
<feature type="active site" evidence="1">
    <location>
        <position position="125"/>
    </location>
</feature>
<feature type="binding site" evidence="1">
    <location>
        <begin position="74"/>
        <end position="76"/>
    </location>
    <ligand>
        <name>substrate</name>
    </ligand>
</feature>
<feature type="binding site" evidence="1">
    <location>
        <begin position="110"/>
        <end position="111"/>
    </location>
    <ligand>
        <name>substrate</name>
    </ligand>
</feature>
<reference key="1">
    <citation type="journal article" date="2002" name="Proc. Natl. Acad. Sci. U.S.A.">
        <title>The complete genome sequence of Chlorobium tepidum TLS, a photosynthetic, anaerobic, green-sulfur bacterium.</title>
        <authorList>
            <person name="Eisen J.A."/>
            <person name="Nelson K.E."/>
            <person name="Paulsen I.T."/>
            <person name="Heidelberg J.F."/>
            <person name="Wu M."/>
            <person name="Dodson R.J."/>
            <person name="DeBoy R.T."/>
            <person name="Gwinn M.L."/>
            <person name="Nelson W.C."/>
            <person name="Haft D.H."/>
            <person name="Hickey E.K."/>
            <person name="Peterson J.D."/>
            <person name="Durkin A.S."/>
            <person name="Kolonay J.F."/>
            <person name="Yang F."/>
            <person name="Holt I.E."/>
            <person name="Umayam L.A."/>
            <person name="Mason T.M."/>
            <person name="Brenner M."/>
            <person name="Shea T.P."/>
            <person name="Parksey D.S."/>
            <person name="Nierman W.C."/>
            <person name="Feldblyum T.V."/>
            <person name="Hansen C.L."/>
            <person name="Craven M.B."/>
            <person name="Radune D."/>
            <person name="Vamathevan J.J."/>
            <person name="Khouri H.M."/>
            <person name="White O."/>
            <person name="Gruber T.M."/>
            <person name="Ketchum K.A."/>
            <person name="Venter J.C."/>
            <person name="Tettelin H."/>
            <person name="Bryant D.A."/>
            <person name="Fraser C.M."/>
        </authorList>
    </citation>
    <scope>NUCLEOTIDE SEQUENCE [LARGE SCALE GENOMIC DNA]</scope>
    <source>
        <strain>ATCC 49652 / DSM 12025 / NBRC 103806 / TLS</strain>
    </source>
</reference>
<dbReference type="EC" id="4.6.1.17" evidence="1"/>
<dbReference type="EMBL" id="AE006470">
    <property type="protein sequence ID" value="AAM72559.1"/>
    <property type="molecule type" value="Genomic_DNA"/>
</dbReference>
<dbReference type="RefSeq" id="NP_662217.1">
    <property type="nucleotide sequence ID" value="NC_002932.3"/>
</dbReference>
<dbReference type="RefSeq" id="WP_010932998.1">
    <property type="nucleotide sequence ID" value="NC_002932.3"/>
</dbReference>
<dbReference type="SMR" id="P59014"/>
<dbReference type="STRING" id="194439.CT1330"/>
<dbReference type="EnsemblBacteria" id="AAM72559">
    <property type="protein sequence ID" value="AAM72559"/>
    <property type="gene ID" value="CT1330"/>
</dbReference>
<dbReference type="KEGG" id="cte:CT1330"/>
<dbReference type="PATRIC" id="fig|194439.7.peg.1210"/>
<dbReference type="eggNOG" id="COG0315">
    <property type="taxonomic scope" value="Bacteria"/>
</dbReference>
<dbReference type="eggNOG" id="COG0521">
    <property type="taxonomic scope" value="Bacteria"/>
</dbReference>
<dbReference type="HOGENOM" id="CLU_063423_1_1_10"/>
<dbReference type="OrthoDB" id="9794429at2"/>
<dbReference type="UniPathway" id="UPA00344"/>
<dbReference type="Proteomes" id="UP000001007">
    <property type="component" value="Chromosome"/>
</dbReference>
<dbReference type="GO" id="GO:0061799">
    <property type="term" value="F:cyclic pyranopterin monophosphate synthase activity"/>
    <property type="evidence" value="ECO:0007669"/>
    <property type="project" value="UniProtKB-UniRule"/>
</dbReference>
<dbReference type="GO" id="GO:0006777">
    <property type="term" value="P:Mo-molybdopterin cofactor biosynthetic process"/>
    <property type="evidence" value="ECO:0007669"/>
    <property type="project" value="UniProtKB-UniRule"/>
</dbReference>
<dbReference type="CDD" id="cd01420">
    <property type="entry name" value="MoaC_PE"/>
    <property type="match status" value="1"/>
</dbReference>
<dbReference type="CDD" id="cd00886">
    <property type="entry name" value="MogA_MoaB"/>
    <property type="match status" value="1"/>
</dbReference>
<dbReference type="Gene3D" id="3.40.980.10">
    <property type="entry name" value="MoaB/Mog-like domain"/>
    <property type="match status" value="1"/>
</dbReference>
<dbReference type="Gene3D" id="3.30.70.640">
    <property type="entry name" value="Molybdopterin cofactor biosynthesis C (MoaC) domain"/>
    <property type="match status" value="1"/>
</dbReference>
<dbReference type="HAMAP" id="MF_01224_B">
    <property type="entry name" value="MoaC_B"/>
    <property type="match status" value="1"/>
</dbReference>
<dbReference type="InterPro" id="IPR036425">
    <property type="entry name" value="MoaB/Mog-like_dom_sf"/>
</dbReference>
<dbReference type="InterPro" id="IPR001453">
    <property type="entry name" value="MoaB/Mog_dom"/>
</dbReference>
<dbReference type="InterPro" id="IPR023045">
    <property type="entry name" value="MoaC"/>
</dbReference>
<dbReference type="InterPro" id="IPR047594">
    <property type="entry name" value="MoaC_bact/euk"/>
</dbReference>
<dbReference type="InterPro" id="IPR012247">
    <property type="entry name" value="MoaC_MogA"/>
</dbReference>
<dbReference type="InterPro" id="IPR036522">
    <property type="entry name" value="MoaC_sf"/>
</dbReference>
<dbReference type="InterPro" id="IPR002820">
    <property type="entry name" value="Mopterin_CF_biosynth-C_dom"/>
</dbReference>
<dbReference type="InterPro" id="IPR051920">
    <property type="entry name" value="MPT_Adenylyltrnsfr/MoaC-Rel"/>
</dbReference>
<dbReference type="NCBIfam" id="TIGR00581">
    <property type="entry name" value="moaC"/>
    <property type="match status" value="1"/>
</dbReference>
<dbReference type="NCBIfam" id="TIGR00177">
    <property type="entry name" value="molyb_syn"/>
    <property type="match status" value="1"/>
</dbReference>
<dbReference type="NCBIfam" id="NF002947">
    <property type="entry name" value="PRK03604.1"/>
    <property type="match status" value="1"/>
</dbReference>
<dbReference type="NCBIfam" id="NF006870">
    <property type="entry name" value="PRK09364.1"/>
    <property type="match status" value="1"/>
</dbReference>
<dbReference type="PANTHER" id="PTHR43764">
    <property type="entry name" value="MOLYBDENUM COFACTOR BIOSYNTHESIS"/>
    <property type="match status" value="1"/>
</dbReference>
<dbReference type="PANTHER" id="PTHR43764:SF1">
    <property type="entry name" value="MOLYBDOPTERIN MOLYBDOTRANSFERASE"/>
    <property type="match status" value="1"/>
</dbReference>
<dbReference type="Pfam" id="PF01967">
    <property type="entry name" value="MoaC"/>
    <property type="match status" value="1"/>
</dbReference>
<dbReference type="Pfam" id="PF00994">
    <property type="entry name" value="MoCF_biosynth"/>
    <property type="match status" value="1"/>
</dbReference>
<dbReference type="PIRSF" id="PIRSF036594">
    <property type="entry name" value="MoaC_MogA"/>
    <property type="match status" value="1"/>
</dbReference>
<dbReference type="SMART" id="SM00852">
    <property type="entry name" value="MoCF_biosynth"/>
    <property type="match status" value="1"/>
</dbReference>
<dbReference type="SUPFAM" id="SSF55040">
    <property type="entry name" value="Molybdenum cofactor biosynthesis protein C, MoaC"/>
    <property type="match status" value="1"/>
</dbReference>
<dbReference type="SUPFAM" id="SSF53218">
    <property type="entry name" value="Molybdenum cofactor biosynthesis proteins"/>
    <property type="match status" value="1"/>
</dbReference>
<evidence type="ECO:0000250" key="1">
    <source>
        <dbReference type="UniProtKB" id="P0A738"/>
    </source>
</evidence>
<evidence type="ECO:0000305" key="2"/>